<organism>
    <name type="scientific">Galeorhinus galeus</name>
    <name type="common">Tope shark</name>
    <name type="synonym">Galeorhinus australis</name>
    <dbReference type="NCBI Taxonomy" id="86063"/>
    <lineage>
        <taxon>Eukaryota</taxon>
        <taxon>Metazoa</taxon>
        <taxon>Chordata</taxon>
        <taxon>Craniata</taxon>
        <taxon>Vertebrata</taxon>
        <taxon>Chondrichthyes</taxon>
        <taxon>Elasmobranchii</taxon>
        <taxon>Galeomorphii</taxon>
        <taxon>Galeoidea</taxon>
        <taxon>Carcharhiniformes</taxon>
        <taxon>Triakidae</taxon>
        <taxon>Galeorhinus</taxon>
    </lineage>
</organism>
<comment type="function">
    <text evidence="1">Monomeric heme protein which primary function is to store oxygen and facilitate its diffusion within muscle tissues. Reversibly binds oxygen through a pentacoordinated heme iron and enables its timely and efficient release as needed during periods of heightened demand. Depending on the oxidative conditions of tissues and cells, and in addition to its ability to bind oxygen, it also has a nitrite reductase activity whereby it regulates the production of bioactive nitric oxide. Under stress conditions, like hypoxia and anoxia, it also protects cells against reactive oxygen species thanks to its pseudoperoxidase activity.</text>
</comment>
<comment type="catalytic activity">
    <reaction evidence="1">
        <text>Fe(III)-heme b-[protein] + nitric oxide + H2O = Fe(II)-heme b-[protein] + nitrite + 2 H(+)</text>
        <dbReference type="Rhea" id="RHEA:77711"/>
        <dbReference type="Rhea" id="RHEA-COMP:18975"/>
        <dbReference type="Rhea" id="RHEA-COMP:18976"/>
        <dbReference type="ChEBI" id="CHEBI:15377"/>
        <dbReference type="ChEBI" id="CHEBI:15378"/>
        <dbReference type="ChEBI" id="CHEBI:16301"/>
        <dbReference type="ChEBI" id="CHEBI:16480"/>
        <dbReference type="ChEBI" id="CHEBI:55376"/>
        <dbReference type="ChEBI" id="CHEBI:60344"/>
    </reaction>
    <physiologicalReaction direction="right-to-left" evidence="1">
        <dbReference type="Rhea" id="RHEA:77713"/>
    </physiologicalReaction>
</comment>
<comment type="catalytic activity">
    <reaction evidence="1">
        <text>H2O2 + AH2 = A + 2 H2O</text>
        <dbReference type="Rhea" id="RHEA:30275"/>
        <dbReference type="ChEBI" id="CHEBI:13193"/>
        <dbReference type="ChEBI" id="CHEBI:15377"/>
        <dbReference type="ChEBI" id="CHEBI:16240"/>
        <dbReference type="ChEBI" id="CHEBI:17499"/>
    </reaction>
</comment>
<comment type="subunit">
    <text evidence="2">Monomeric.</text>
</comment>
<comment type="subcellular location">
    <subcellularLocation>
        <location evidence="1">Cytoplasm</location>
        <location evidence="1">Sarcoplasm</location>
    </subcellularLocation>
</comment>
<comment type="similarity">
    <text evidence="3">Belongs to the globin family.</text>
</comment>
<name>MYG_GALGA</name>
<proteinExistence type="evidence at protein level"/>
<keyword id="KW-0007">Acetylation</keyword>
<keyword id="KW-0963">Cytoplasm</keyword>
<keyword id="KW-0903">Direct protein sequencing</keyword>
<keyword id="KW-0349">Heme</keyword>
<keyword id="KW-0408">Iron</keyword>
<keyword id="KW-0479">Metal-binding</keyword>
<keyword id="KW-0514">Muscle protein</keyword>
<keyword id="KW-0560">Oxidoreductase</keyword>
<keyword id="KW-0561">Oxygen transport</keyword>
<keyword id="KW-0813">Transport</keyword>
<sequence>MADWDKVNSVWSAMEANITAVGQNILLRLFEQYPESQSYFPKLKNKSLGELKDTADIKAQADTVLKALGNIVKKKGNHSQPVKALAATHITTHKIPPHYFTKITTIAVGVLSEMYPSEMNAQAQEAFSGAFKSICSDIEKEYKAANFQG</sequence>
<evidence type="ECO:0000250" key="1">
    <source>
        <dbReference type="UniProtKB" id="P02144"/>
    </source>
</evidence>
<evidence type="ECO:0000250" key="2">
    <source>
        <dbReference type="UniProtKB" id="P02185"/>
    </source>
</evidence>
<evidence type="ECO:0000255" key="3">
    <source>
        <dbReference type="PROSITE-ProRule" id="PRU00238"/>
    </source>
</evidence>
<evidence type="ECO:0000269" key="4">
    <source>
    </source>
</evidence>
<feature type="initiator methionine" description="Removed" evidence="4">
    <location>
        <position position="1"/>
    </location>
</feature>
<feature type="chain" id="PRO_0000053295" description="Myoglobin">
    <location>
        <begin position="2"/>
        <end position="149"/>
    </location>
</feature>
<feature type="domain" description="Globin" evidence="3">
    <location>
        <begin position="2"/>
        <end position="143"/>
    </location>
</feature>
<feature type="binding site" description="proximal binding residue" evidence="1">
    <location>
        <position position="89"/>
    </location>
    <ligand>
        <name>heme b</name>
        <dbReference type="ChEBI" id="CHEBI:60344"/>
    </ligand>
    <ligandPart>
        <name>Fe</name>
        <dbReference type="ChEBI" id="CHEBI:18248"/>
    </ligandPart>
</feature>
<feature type="modified residue" description="N-acetylalanine" evidence="4">
    <location>
        <position position="2"/>
    </location>
</feature>
<gene>
    <name type="primary">mb</name>
</gene>
<accession>P14397</accession>
<reference key="1">
    <citation type="journal article" date="1981" name="Aust. J. Biol. Sci.">
        <title>Myoglobins of cartilaginous fishes III. Amino acid sequence of myoglobin of the shark Galeorhinus australis.</title>
        <authorList>
            <person name="Fisher W.K."/>
            <person name="Koureas D.D."/>
            <person name="Thompson E.O.P."/>
        </authorList>
    </citation>
    <scope>PROTEIN SEQUENCE OF 2-149</scope>
    <scope>ACETYLATION AT ALA-2</scope>
</reference>
<dbReference type="EC" id="1.7.-.-" evidence="1"/>
<dbReference type="EC" id="1.11.1.-" evidence="1"/>
<dbReference type="SMR" id="P14397"/>
<dbReference type="iPTMnet" id="P14397"/>
<dbReference type="GO" id="GO:0070062">
    <property type="term" value="C:extracellular exosome"/>
    <property type="evidence" value="ECO:0007669"/>
    <property type="project" value="TreeGrafter"/>
</dbReference>
<dbReference type="GO" id="GO:0016528">
    <property type="term" value="C:sarcoplasm"/>
    <property type="evidence" value="ECO:0000250"/>
    <property type="project" value="UniProtKB"/>
</dbReference>
<dbReference type="GO" id="GO:0020037">
    <property type="term" value="F:heme binding"/>
    <property type="evidence" value="ECO:0007669"/>
    <property type="project" value="InterPro"/>
</dbReference>
<dbReference type="GO" id="GO:0046872">
    <property type="term" value="F:metal ion binding"/>
    <property type="evidence" value="ECO:0007669"/>
    <property type="project" value="UniProtKB-KW"/>
</dbReference>
<dbReference type="GO" id="GO:0098809">
    <property type="term" value="F:nitrite reductase activity"/>
    <property type="evidence" value="ECO:0000250"/>
    <property type="project" value="UniProtKB"/>
</dbReference>
<dbReference type="GO" id="GO:0019825">
    <property type="term" value="F:oxygen binding"/>
    <property type="evidence" value="ECO:0007669"/>
    <property type="project" value="InterPro"/>
</dbReference>
<dbReference type="GO" id="GO:0005344">
    <property type="term" value="F:oxygen carrier activity"/>
    <property type="evidence" value="ECO:0000250"/>
    <property type="project" value="UniProtKB"/>
</dbReference>
<dbReference type="GO" id="GO:0004601">
    <property type="term" value="F:peroxidase activity"/>
    <property type="evidence" value="ECO:0000250"/>
    <property type="project" value="UniProtKB"/>
</dbReference>
<dbReference type="GO" id="GO:0019430">
    <property type="term" value="P:removal of superoxide radicals"/>
    <property type="evidence" value="ECO:0000250"/>
    <property type="project" value="UniProtKB"/>
</dbReference>
<dbReference type="CDD" id="cd08926">
    <property type="entry name" value="Mb"/>
    <property type="match status" value="1"/>
</dbReference>
<dbReference type="Gene3D" id="6.10.140.2100">
    <property type="match status" value="1"/>
</dbReference>
<dbReference type="Gene3D" id="6.10.140.2110">
    <property type="match status" value="1"/>
</dbReference>
<dbReference type="InterPro" id="IPR000971">
    <property type="entry name" value="Globin"/>
</dbReference>
<dbReference type="InterPro" id="IPR009050">
    <property type="entry name" value="Globin-like_sf"/>
</dbReference>
<dbReference type="InterPro" id="IPR002335">
    <property type="entry name" value="Myoglobin"/>
</dbReference>
<dbReference type="PANTHER" id="PTHR47132">
    <property type="entry name" value="MYOGLOBIN"/>
    <property type="match status" value="1"/>
</dbReference>
<dbReference type="PANTHER" id="PTHR47132:SF1">
    <property type="entry name" value="MYOGLOBIN"/>
    <property type="match status" value="1"/>
</dbReference>
<dbReference type="Pfam" id="PF00042">
    <property type="entry name" value="Globin"/>
    <property type="match status" value="1"/>
</dbReference>
<dbReference type="PRINTS" id="PR00613">
    <property type="entry name" value="MYOGLOBIN"/>
</dbReference>
<dbReference type="SUPFAM" id="SSF46458">
    <property type="entry name" value="Globin-like"/>
    <property type="match status" value="1"/>
</dbReference>
<dbReference type="PROSITE" id="PS01033">
    <property type="entry name" value="GLOBIN"/>
    <property type="match status" value="1"/>
</dbReference>
<protein>
    <recommendedName>
        <fullName>Myoglobin</fullName>
    </recommendedName>
    <alternativeName>
        <fullName evidence="1">Nitrite reductase MB</fullName>
        <ecNumber evidence="1">1.7.-.-</ecNumber>
    </alternativeName>
    <alternativeName>
        <fullName evidence="1">Pseudoperoxidase MB</fullName>
        <ecNumber evidence="1">1.11.1.-</ecNumber>
    </alternativeName>
</protein>